<name>HIS4_ACTPJ</name>
<feature type="chain" id="PRO_1000135073" description="1-(5-phosphoribosyl)-5-[(5-phosphoribosylamino)methylideneamino] imidazole-4-carboxamide isomerase">
    <location>
        <begin position="1"/>
        <end position="250"/>
    </location>
</feature>
<feature type="active site" description="Proton acceptor" evidence="1">
    <location>
        <position position="12"/>
    </location>
</feature>
<feature type="active site" description="Proton donor" evidence="1">
    <location>
        <position position="134"/>
    </location>
</feature>
<accession>B0BU54</accession>
<sequence length="250" mass="26842">MQKKSIIIPALDLIDGNVVRLHQGDYAKQTTYSDNPIEQFANYLAQGAEQLHLVDLTGAKDPAKRQTALIGKIIAETNCQIQVGGGIRTEQDVADLLAVGANRVVIGSTAVKDRAMVKGWFEKYGAEKFVLALDVNIDASGQKIIAISGWQEASGVSLEELIEDYQVVGLQHVLCTDISRDGTLAGSNVNLYREICAKYPKIHFQSSGGIGSLDDIKALKGTGVSGVIVGRALLEGKFNVAEAIECWQNG</sequence>
<protein>
    <recommendedName>
        <fullName evidence="1">1-(5-phosphoribosyl)-5-[(5-phosphoribosylamino)methylideneamino] imidazole-4-carboxamide isomerase</fullName>
        <ecNumber evidence="1">5.3.1.16</ecNumber>
    </recommendedName>
    <alternativeName>
        <fullName evidence="1">Phosphoribosylformimino-5-aminoimidazole carboxamide ribotide isomerase</fullName>
    </alternativeName>
</protein>
<dbReference type="EC" id="5.3.1.16" evidence="1"/>
<dbReference type="EMBL" id="CP000687">
    <property type="protein sequence ID" value="ABY70621.1"/>
    <property type="molecule type" value="Genomic_DNA"/>
</dbReference>
<dbReference type="RefSeq" id="WP_012263493.1">
    <property type="nucleotide sequence ID" value="NC_010278.1"/>
</dbReference>
<dbReference type="SMR" id="B0BU54"/>
<dbReference type="KEGG" id="apj:APJL_2076"/>
<dbReference type="HOGENOM" id="CLU_048577_1_2_6"/>
<dbReference type="UniPathway" id="UPA00031">
    <property type="reaction ID" value="UER00009"/>
</dbReference>
<dbReference type="Proteomes" id="UP000008547">
    <property type="component" value="Chromosome"/>
</dbReference>
<dbReference type="GO" id="GO:0005737">
    <property type="term" value="C:cytoplasm"/>
    <property type="evidence" value="ECO:0007669"/>
    <property type="project" value="UniProtKB-SubCell"/>
</dbReference>
<dbReference type="GO" id="GO:0003949">
    <property type="term" value="F:1-(5-phosphoribosyl)-5-[(5-phosphoribosylamino)methylideneamino]imidazole-4-carboxamide isomerase activity"/>
    <property type="evidence" value="ECO:0007669"/>
    <property type="project" value="UniProtKB-UniRule"/>
</dbReference>
<dbReference type="GO" id="GO:0000105">
    <property type="term" value="P:L-histidine biosynthetic process"/>
    <property type="evidence" value="ECO:0007669"/>
    <property type="project" value="UniProtKB-UniRule"/>
</dbReference>
<dbReference type="GO" id="GO:0000162">
    <property type="term" value="P:L-tryptophan biosynthetic process"/>
    <property type="evidence" value="ECO:0007669"/>
    <property type="project" value="TreeGrafter"/>
</dbReference>
<dbReference type="CDD" id="cd04732">
    <property type="entry name" value="HisA"/>
    <property type="match status" value="1"/>
</dbReference>
<dbReference type="FunFam" id="3.20.20.70:FF:000009">
    <property type="entry name" value="1-(5-phosphoribosyl)-5-[(5-phosphoribosylamino)methylideneamino] imidazole-4-carboxamide isomerase"/>
    <property type="match status" value="1"/>
</dbReference>
<dbReference type="Gene3D" id="3.20.20.70">
    <property type="entry name" value="Aldolase class I"/>
    <property type="match status" value="1"/>
</dbReference>
<dbReference type="HAMAP" id="MF_01014">
    <property type="entry name" value="HisA"/>
    <property type="match status" value="1"/>
</dbReference>
<dbReference type="InterPro" id="IPR013785">
    <property type="entry name" value="Aldolase_TIM"/>
</dbReference>
<dbReference type="InterPro" id="IPR006062">
    <property type="entry name" value="His_biosynth"/>
</dbReference>
<dbReference type="InterPro" id="IPR006063">
    <property type="entry name" value="HisA_bact_arch"/>
</dbReference>
<dbReference type="InterPro" id="IPR044524">
    <property type="entry name" value="Isoase_HisA-like"/>
</dbReference>
<dbReference type="InterPro" id="IPR023016">
    <property type="entry name" value="Isoase_HisA-like_bact"/>
</dbReference>
<dbReference type="InterPro" id="IPR011060">
    <property type="entry name" value="RibuloseP-bd_barrel"/>
</dbReference>
<dbReference type="NCBIfam" id="TIGR00007">
    <property type="entry name" value="1-(5-phosphoribosyl)-5-[(5-phosphoribosylamino)methylideneamino]imidazole-4-carboxamide isomerase"/>
    <property type="match status" value="1"/>
</dbReference>
<dbReference type="PANTHER" id="PTHR43090">
    <property type="entry name" value="1-(5-PHOSPHORIBOSYL)-5-[(5-PHOSPHORIBOSYLAMINO)METHYLIDENEAMINO] IMIDAZOLE-4-CARBOXAMIDE ISOMERASE"/>
    <property type="match status" value="1"/>
</dbReference>
<dbReference type="PANTHER" id="PTHR43090:SF2">
    <property type="entry name" value="1-(5-PHOSPHORIBOSYL)-5-[(5-PHOSPHORIBOSYLAMINO)METHYLIDENEAMINO] IMIDAZOLE-4-CARBOXAMIDE ISOMERASE"/>
    <property type="match status" value="1"/>
</dbReference>
<dbReference type="Pfam" id="PF00977">
    <property type="entry name" value="His_biosynth"/>
    <property type="match status" value="1"/>
</dbReference>
<dbReference type="SUPFAM" id="SSF51366">
    <property type="entry name" value="Ribulose-phoshate binding barrel"/>
    <property type="match status" value="1"/>
</dbReference>
<proteinExistence type="inferred from homology"/>
<reference key="1">
    <citation type="journal article" date="2008" name="PLoS ONE">
        <title>Genome biology of Actinobacillus pleuropneumoniae JL03, an isolate of serotype 3 prevalent in China.</title>
        <authorList>
            <person name="Xu Z."/>
            <person name="Zhou Y."/>
            <person name="Li L."/>
            <person name="Zhou R."/>
            <person name="Xiao S."/>
            <person name="Wan Y."/>
            <person name="Zhang S."/>
            <person name="Wang K."/>
            <person name="Li W."/>
            <person name="Li L."/>
            <person name="Jin H."/>
            <person name="Kang M."/>
            <person name="Dalai B."/>
            <person name="Li T."/>
            <person name="Liu L."/>
            <person name="Cheng Y."/>
            <person name="Zhang L."/>
            <person name="Xu T."/>
            <person name="Zheng H."/>
            <person name="Pu S."/>
            <person name="Wang B."/>
            <person name="Gu W."/>
            <person name="Zhang X.L."/>
            <person name="Zhu G.-F."/>
            <person name="Wang S."/>
            <person name="Zhao G.-P."/>
            <person name="Chen H."/>
        </authorList>
    </citation>
    <scope>NUCLEOTIDE SEQUENCE [LARGE SCALE GENOMIC DNA]</scope>
    <source>
        <strain>JL03</strain>
    </source>
</reference>
<keyword id="KW-0028">Amino-acid biosynthesis</keyword>
<keyword id="KW-0963">Cytoplasm</keyword>
<keyword id="KW-0368">Histidine biosynthesis</keyword>
<keyword id="KW-0413">Isomerase</keyword>
<organism>
    <name type="scientific">Actinobacillus pleuropneumoniae serotype 3 (strain JL03)</name>
    <dbReference type="NCBI Taxonomy" id="434271"/>
    <lineage>
        <taxon>Bacteria</taxon>
        <taxon>Pseudomonadati</taxon>
        <taxon>Pseudomonadota</taxon>
        <taxon>Gammaproteobacteria</taxon>
        <taxon>Pasteurellales</taxon>
        <taxon>Pasteurellaceae</taxon>
        <taxon>Actinobacillus</taxon>
    </lineage>
</organism>
<evidence type="ECO:0000255" key="1">
    <source>
        <dbReference type="HAMAP-Rule" id="MF_01014"/>
    </source>
</evidence>
<comment type="catalytic activity">
    <reaction evidence="1">
        <text>1-(5-phospho-beta-D-ribosyl)-5-[(5-phospho-beta-D-ribosylamino)methylideneamino]imidazole-4-carboxamide = 5-[(5-phospho-1-deoxy-D-ribulos-1-ylimino)methylamino]-1-(5-phospho-beta-D-ribosyl)imidazole-4-carboxamide</text>
        <dbReference type="Rhea" id="RHEA:15469"/>
        <dbReference type="ChEBI" id="CHEBI:58435"/>
        <dbReference type="ChEBI" id="CHEBI:58525"/>
        <dbReference type="EC" id="5.3.1.16"/>
    </reaction>
</comment>
<comment type="pathway">
    <text evidence="1">Amino-acid biosynthesis; L-histidine biosynthesis; L-histidine from 5-phospho-alpha-D-ribose 1-diphosphate: step 4/9.</text>
</comment>
<comment type="subcellular location">
    <subcellularLocation>
        <location evidence="1">Cytoplasm</location>
    </subcellularLocation>
</comment>
<comment type="similarity">
    <text evidence="1">Belongs to the HisA/HisF family.</text>
</comment>
<gene>
    <name evidence="1" type="primary">hisA</name>
    <name type="ordered locus">APJL_2076</name>
</gene>